<gene>
    <name evidence="1" type="primary">grcA</name>
    <name type="ordered locus">VS_0498</name>
</gene>
<keyword id="KW-0556">Organic radical</keyword>
<name>GRCA_VIBA3</name>
<dbReference type="EMBL" id="FM954972">
    <property type="protein sequence ID" value="CAV17504.1"/>
    <property type="molecule type" value="Genomic_DNA"/>
</dbReference>
<dbReference type="SMR" id="B7VJ50"/>
<dbReference type="STRING" id="575788.VS_0498"/>
<dbReference type="KEGG" id="vsp:VS_0498"/>
<dbReference type="eggNOG" id="COG3445">
    <property type="taxonomic scope" value="Bacteria"/>
</dbReference>
<dbReference type="HOGENOM" id="CLU_133780_0_0_6"/>
<dbReference type="Proteomes" id="UP000009100">
    <property type="component" value="Chromosome 1"/>
</dbReference>
<dbReference type="GO" id="GO:0005829">
    <property type="term" value="C:cytosol"/>
    <property type="evidence" value="ECO:0007669"/>
    <property type="project" value="TreeGrafter"/>
</dbReference>
<dbReference type="GO" id="GO:0008861">
    <property type="term" value="F:formate C-acetyltransferase activity"/>
    <property type="evidence" value="ECO:0007669"/>
    <property type="project" value="TreeGrafter"/>
</dbReference>
<dbReference type="FunFam" id="3.20.70.20:FF:000002">
    <property type="entry name" value="Autonomous glycyl radical cofactor"/>
    <property type="match status" value="1"/>
</dbReference>
<dbReference type="Gene3D" id="3.20.70.20">
    <property type="match status" value="1"/>
</dbReference>
<dbReference type="HAMAP" id="MF_00806">
    <property type="entry name" value="GrcA"/>
    <property type="match status" value="1"/>
</dbReference>
<dbReference type="InterPro" id="IPR050244">
    <property type="entry name" value="Auton_GlycylRad_Cofactor"/>
</dbReference>
<dbReference type="InterPro" id="IPR019777">
    <property type="entry name" value="Form_AcTrfase_GR_CS"/>
</dbReference>
<dbReference type="InterPro" id="IPR001150">
    <property type="entry name" value="Gly_radical"/>
</dbReference>
<dbReference type="InterPro" id="IPR011140">
    <property type="entry name" value="Glycyl_radical_cofactor_GrcA"/>
</dbReference>
<dbReference type="NCBIfam" id="TIGR04365">
    <property type="entry name" value="spare_glycyl"/>
    <property type="match status" value="1"/>
</dbReference>
<dbReference type="PANTHER" id="PTHR30191">
    <property type="entry name" value="FORMATE ACETYLTRANSFERASE"/>
    <property type="match status" value="1"/>
</dbReference>
<dbReference type="PANTHER" id="PTHR30191:SF0">
    <property type="entry name" value="FORMATE ACETYLTRANSFERASE 1"/>
    <property type="match status" value="1"/>
</dbReference>
<dbReference type="Pfam" id="PF01228">
    <property type="entry name" value="Gly_radical"/>
    <property type="match status" value="1"/>
</dbReference>
<dbReference type="PIRSF" id="PIRSF000378">
    <property type="entry name" value="Gly_radicl_yfiD"/>
    <property type="match status" value="1"/>
</dbReference>
<dbReference type="SUPFAM" id="SSF51998">
    <property type="entry name" value="PFL-like glycyl radical enzymes"/>
    <property type="match status" value="1"/>
</dbReference>
<dbReference type="PROSITE" id="PS00850">
    <property type="entry name" value="GLY_RADICAL_1"/>
    <property type="match status" value="1"/>
</dbReference>
<dbReference type="PROSITE" id="PS51149">
    <property type="entry name" value="GLY_RADICAL_2"/>
    <property type="match status" value="1"/>
</dbReference>
<proteinExistence type="inferred from homology"/>
<reference key="1">
    <citation type="submission" date="2009-02" db="EMBL/GenBank/DDBJ databases">
        <title>Vibrio splendidus str. LGP32 complete genome.</title>
        <authorList>
            <person name="Mazel D."/>
            <person name="Le Roux F."/>
        </authorList>
    </citation>
    <scope>NUCLEOTIDE SEQUENCE [LARGE SCALE GENOMIC DNA]</scope>
    <source>
        <strain>LGP32</strain>
    </source>
</reference>
<comment type="function">
    <text evidence="1">Acts as a radical domain for damaged PFL and possibly other radical proteins.</text>
</comment>
<protein>
    <recommendedName>
        <fullName evidence="1">Autonomous glycyl radical cofactor</fullName>
    </recommendedName>
</protein>
<accession>B7VJ50</accession>
<feature type="chain" id="PRO_1000148573" description="Autonomous glycyl radical cofactor">
    <location>
        <begin position="1"/>
        <end position="125"/>
    </location>
</feature>
<feature type="domain" description="Glycine radical" evidence="1">
    <location>
        <begin position="5"/>
        <end position="125"/>
    </location>
</feature>
<feature type="modified residue" description="Glycine radical" evidence="1">
    <location>
        <position position="100"/>
    </location>
</feature>
<organism>
    <name type="scientific">Vibrio atlanticus (strain LGP32)</name>
    <name type="common">Vibrio splendidus (strain Mel32)</name>
    <dbReference type="NCBI Taxonomy" id="575788"/>
    <lineage>
        <taxon>Bacteria</taxon>
        <taxon>Pseudomonadati</taxon>
        <taxon>Pseudomonadota</taxon>
        <taxon>Gammaproteobacteria</taxon>
        <taxon>Vibrionales</taxon>
        <taxon>Vibrionaceae</taxon>
        <taxon>Vibrio</taxon>
    </lineage>
</organism>
<evidence type="ECO:0000255" key="1">
    <source>
        <dbReference type="HAMAP-Rule" id="MF_00806"/>
    </source>
</evidence>
<sequence>MIQGIQITKAANDDLLNSIWLLDSEKNEARCVVATSGFEADQVISAADLGEYESREVAIEAAPRIEGGQHLNVNVLKRETLEDAVAHPENYPQLTIRVSGYAVRFNSLTTEQQRDVIARTFTESL</sequence>